<proteinExistence type="inferred from homology"/>
<keyword id="KW-0066">ATP synthesis</keyword>
<keyword id="KW-0997">Cell inner membrane</keyword>
<keyword id="KW-1003">Cell membrane</keyword>
<keyword id="KW-0138">CF(0)</keyword>
<keyword id="KW-0375">Hydrogen ion transport</keyword>
<keyword id="KW-0406">Ion transport</keyword>
<keyword id="KW-0472">Membrane</keyword>
<keyword id="KW-1185">Reference proteome</keyword>
<keyword id="KW-0812">Transmembrane</keyword>
<keyword id="KW-1133">Transmembrane helix</keyword>
<keyword id="KW-0813">Transport</keyword>
<dbReference type="EMBL" id="AE009442">
    <property type="protein sequence ID" value="AAO28311.1"/>
    <property type="molecule type" value="Genomic_DNA"/>
</dbReference>
<dbReference type="RefSeq" id="WP_004090074.1">
    <property type="nucleotide sequence ID" value="NC_004556.1"/>
</dbReference>
<dbReference type="SMR" id="Q87E86"/>
<dbReference type="KEGG" id="xft:PD_0432"/>
<dbReference type="HOGENOM" id="CLU_079215_4_5_6"/>
<dbReference type="Proteomes" id="UP000002516">
    <property type="component" value="Chromosome"/>
</dbReference>
<dbReference type="GO" id="GO:0005886">
    <property type="term" value="C:plasma membrane"/>
    <property type="evidence" value="ECO:0007669"/>
    <property type="project" value="UniProtKB-SubCell"/>
</dbReference>
<dbReference type="GO" id="GO:0045259">
    <property type="term" value="C:proton-transporting ATP synthase complex"/>
    <property type="evidence" value="ECO:0007669"/>
    <property type="project" value="UniProtKB-KW"/>
</dbReference>
<dbReference type="GO" id="GO:0046933">
    <property type="term" value="F:proton-transporting ATP synthase activity, rotational mechanism"/>
    <property type="evidence" value="ECO:0007669"/>
    <property type="project" value="UniProtKB-UniRule"/>
</dbReference>
<dbReference type="GO" id="GO:0046961">
    <property type="term" value="F:proton-transporting ATPase activity, rotational mechanism"/>
    <property type="evidence" value="ECO:0007669"/>
    <property type="project" value="TreeGrafter"/>
</dbReference>
<dbReference type="CDD" id="cd06503">
    <property type="entry name" value="ATP-synt_Fo_b"/>
    <property type="match status" value="1"/>
</dbReference>
<dbReference type="Gene3D" id="6.10.250.1580">
    <property type="match status" value="1"/>
</dbReference>
<dbReference type="HAMAP" id="MF_01398">
    <property type="entry name" value="ATP_synth_b_bprime"/>
    <property type="match status" value="1"/>
</dbReference>
<dbReference type="InterPro" id="IPR028987">
    <property type="entry name" value="ATP_synth_B-like_membr_sf"/>
</dbReference>
<dbReference type="InterPro" id="IPR002146">
    <property type="entry name" value="ATP_synth_b/b'su_bac/chlpt"/>
</dbReference>
<dbReference type="InterPro" id="IPR005864">
    <property type="entry name" value="ATP_synth_F0_bsu_bac"/>
</dbReference>
<dbReference type="InterPro" id="IPR050059">
    <property type="entry name" value="ATP_synthase_B_chain"/>
</dbReference>
<dbReference type="NCBIfam" id="TIGR01144">
    <property type="entry name" value="ATP_synt_b"/>
    <property type="match status" value="1"/>
</dbReference>
<dbReference type="NCBIfam" id="NF004411">
    <property type="entry name" value="PRK05759.1-2"/>
    <property type="match status" value="1"/>
</dbReference>
<dbReference type="PANTHER" id="PTHR33445:SF1">
    <property type="entry name" value="ATP SYNTHASE SUBUNIT B"/>
    <property type="match status" value="1"/>
</dbReference>
<dbReference type="PANTHER" id="PTHR33445">
    <property type="entry name" value="ATP SYNTHASE SUBUNIT B', CHLOROPLASTIC"/>
    <property type="match status" value="1"/>
</dbReference>
<dbReference type="Pfam" id="PF00430">
    <property type="entry name" value="ATP-synt_B"/>
    <property type="match status" value="1"/>
</dbReference>
<dbReference type="SUPFAM" id="SSF81573">
    <property type="entry name" value="F1F0 ATP synthase subunit B, membrane domain"/>
    <property type="match status" value="1"/>
</dbReference>
<evidence type="ECO:0000255" key="1">
    <source>
        <dbReference type="HAMAP-Rule" id="MF_01398"/>
    </source>
</evidence>
<protein>
    <recommendedName>
        <fullName evidence="1">ATP synthase subunit b</fullName>
    </recommendedName>
    <alternativeName>
        <fullName evidence="1">ATP synthase F(0) sector subunit b</fullName>
    </alternativeName>
    <alternativeName>
        <fullName evidence="1">ATPase subunit I</fullName>
    </alternativeName>
    <alternativeName>
        <fullName evidence="1">F-type ATPase subunit b</fullName>
        <shortName evidence="1">F-ATPase subunit b</shortName>
    </alternativeName>
</protein>
<sequence length="156" mass="17411">MDITFTIFAQSLAFAALIWIVATKIWPPLIKVIEERQQKIAEGLAAADLGQKELAQAQEEIKKTLKNAHKKANEIIEQAHARAHQIIEAAKAEAIAETNRQQNLAQVEIEAAAKRAREELRKHVSILAVNGAEKLLKREIDVNTHKMLLDELAAEI</sequence>
<gene>
    <name evidence="1" type="primary">atpF</name>
    <name type="ordered locus">PD_0432</name>
</gene>
<accession>Q87E86</accession>
<reference key="1">
    <citation type="journal article" date="2003" name="J. Bacteriol.">
        <title>Comparative analyses of the complete genome sequences of Pierce's disease and citrus variegated chlorosis strains of Xylella fastidiosa.</title>
        <authorList>
            <person name="Van Sluys M.A."/>
            <person name="de Oliveira M.C."/>
            <person name="Monteiro-Vitorello C.B."/>
            <person name="Miyaki C.Y."/>
            <person name="Furlan L.R."/>
            <person name="Camargo L.E.A."/>
            <person name="da Silva A.C.R."/>
            <person name="Moon D.H."/>
            <person name="Takita M.A."/>
            <person name="Lemos E.G.M."/>
            <person name="Machado M.A."/>
            <person name="Ferro M.I.T."/>
            <person name="da Silva F.R."/>
            <person name="Goldman M.H.S."/>
            <person name="Goldman G.H."/>
            <person name="Lemos M.V.F."/>
            <person name="El-Dorry H."/>
            <person name="Tsai S.M."/>
            <person name="Carrer H."/>
            <person name="Carraro D.M."/>
            <person name="de Oliveira R.C."/>
            <person name="Nunes L.R."/>
            <person name="Siqueira W.J."/>
            <person name="Coutinho L.L."/>
            <person name="Kimura E.T."/>
            <person name="Ferro E.S."/>
            <person name="Harakava R."/>
            <person name="Kuramae E.E."/>
            <person name="Marino C.L."/>
            <person name="Giglioti E."/>
            <person name="Abreu I.L."/>
            <person name="Alves L.M.C."/>
            <person name="do Amaral A.M."/>
            <person name="Baia G.S."/>
            <person name="Blanco S.R."/>
            <person name="Brito M.S."/>
            <person name="Cannavan F.S."/>
            <person name="Celestino A.V."/>
            <person name="da Cunha A.F."/>
            <person name="Fenille R.C."/>
            <person name="Ferro J.A."/>
            <person name="Formighieri E.F."/>
            <person name="Kishi L.T."/>
            <person name="Leoni S.G."/>
            <person name="Oliveira A.R."/>
            <person name="Rosa V.E. Jr."/>
            <person name="Sassaki F.T."/>
            <person name="Sena J.A.D."/>
            <person name="de Souza A.A."/>
            <person name="Truffi D."/>
            <person name="Tsukumo F."/>
            <person name="Yanai G.M."/>
            <person name="Zaros L.G."/>
            <person name="Civerolo E.L."/>
            <person name="Simpson A.J.G."/>
            <person name="Almeida N.F. Jr."/>
            <person name="Setubal J.C."/>
            <person name="Kitajima J.P."/>
        </authorList>
    </citation>
    <scope>NUCLEOTIDE SEQUENCE [LARGE SCALE GENOMIC DNA]</scope>
    <source>
        <strain>Temecula1 / ATCC 700964</strain>
    </source>
</reference>
<organism>
    <name type="scientific">Xylella fastidiosa (strain Temecula1 / ATCC 700964)</name>
    <dbReference type="NCBI Taxonomy" id="183190"/>
    <lineage>
        <taxon>Bacteria</taxon>
        <taxon>Pseudomonadati</taxon>
        <taxon>Pseudomonadota</taxon>
        <taxon>Gammaproteobacteria</taxon>
        <taxon>Lysobacterales</taxon>
        <taxon>Lysobacteraceae</taxon>
        <taxon>Xylella</taxon>
    </lineage>
</organism>
<comment type="function">
    <text evidence="1">F(1)F(0) ATP synthase produces ATP from ADP in the presence of a proton or sodium gradient. F-type ATPases consist of two structural domains, F(1) containing the extramembraneous catalytic core and F(0) containing the membrane proton channel, linked together by a central stalk and a peripheral stalk. During catalysis, ATP synthesis in the catalytic domain of F(1) is coupled via a rotary mechanism of the central stalk subunits to proton translocation.</text>
</comment>
<comment type="function">
    <text evidence="1">Component of the F(0) channel, it forms part of the peripheral stalk, linking F(1) to F(0).</text>
</comment>
<comment type="subunit">
    <text evidence="1">F-type ATPases have 2 components, F(1) - the catalytic core - and F(0) - the membrane proton channel. F(1) has five subunits: alpha(3), beta(3), gamma(1), delta(1), epsilon(1). F(0) has three main subunits: a(1), b(2) and c(10-14). The alpha and beta chains form an alternating ring which encloses part of the gamma chain. F(1) is attached to F(0) by a central stalk formed by the gamma and epsilon chains, while a peripheral stalk is formed by the delta and b chains.</text>
</comment>
<comment type="subcellular location">
    <subcellularLocation>
        <location evidence="1">Cell inner membrane</location>
        <topology evidence="1">Single-pass membrane protein</topology>
    </subcellularLocation>
</comment>
<comment type="similarity">
    <text evidence="1">Belongs to the ATPase B chain family.</text>
</comment>
<name>ATPF_XYLFT</name>
<feature type="chain" id="PRO_0000368877" description="ATP synthase subunit b">
    <location>
        <begin position="1"/>
        <end position="156"/>
    </location>
</feature>
<feature type="transmembrane region" description="Helical" evidence="1">
    <location>
        <begin position="3"/>
        <end position="23"/>
    </location>
</feature>